<gene>
    <name evidence="1" type="primary">apt</name>
    <name type="ordered locus">sync_1226</name>
</gene>
<sequence length="172" mass="18673">MDLHHYVQDIPDFPKPGILFRDISPMLRDPVGWAEVMDRLGVLCDSLKPDLIVGIEARGFIVGMGLATHKKLGFVPVRKPGKLPGKVYGIDYALEYGTDRLEIHADAMRGQPRILVVDDLLATGGTASATADLVKQAGGQLVGCAFIVELTELKGRGRLPGDIQVESLIHYS</sequence>
<organism>
    <name type="scientific">Synechococcus sp. (strain CC9311)</name>
    <dbReference type="NCBI Taxonomy" id="64471"/>
    <lineage>
        <taxon>Bacteria</taxon>
        <taxon>Bacillati</taxon>
        <taxon>Cyanobacteriota</taxon>
        <taxon>Cyanophyceae</taxon>
        <taxon>Synechococcales</taxon>
        <taxon>Synechococcaceae</taxon>
        <taxon>Synechococcus</taxon>
    </lineage>
</organism>
<name>APT_SYNS3</name>
<accession>Q0IAT7</accession>
<dbReference type="EC" id="2.4.2.7" evidence="1"/>
<dbReference type="EMBL" id="CP000435">
    <property type="protein sequence ID" value="ABI47217.1"/>
    <property type="molecule type" value="Genomic_DNA"/>
</dbReference>
<dbReference type="RefSeq" id="WP_011619156.1">
    <property type="nucleotide sequence ID" value="NC_008319.1"/>
</dbReference>
<dbReference type="SMR" id="Q0IAT7"/>
<dbReference type="STRING" id="64471.sync_1226"/>
<dbReference type="KEGG" id="syg:sync_1226"/>
<dbReference type="eggNOG" id="COG0503">
    <property type="taxonomic scope" value="Bacteria"/>
</dbReference>
<dbReference type="HOGENOM" id="CLU_063339_3_0_3"/>
<dbReference type="OrthoDB" id="9803963at2"/>
<dbReference type="UniPathway" id="UPA00588">
    <property type="reaction ID" value="UER00646"/>
</dbReference>
<dbReference type="Proteomes" id="UP000001961">
    <property type="component" value="Chromosome"/>
</dbReference>
<dbReference type="GO" id="GO:0005737">
    <property type="term" value="C:cytoplasm"/>
    <property type="evidence" value="ECO:0007669"/>
    <property type="project" value="UniProtKB-SubCell"/>
</dbReference>
<dbReference type="GO" id="GO:0002055">
    <property type="term" value="F:adenine binding"/>
    <property type="evidence" value="ECO:0007669"/>
    <property type="project" value="TreeGrafter"/>
</dbReference>
<dbReference type="GO" id="GO:0003999">
    <property type="term" value="F:adenine phosphoribosyltransferase activity"/>
    <property type="evidence" value="ECO:0007669"/>
    <property type="project" value="UniProtKB-UniRule"/>
</dbReference>
<dbReference type="GO" id="GO:0016208">
    <property type="term" value="F:AMP binding"/>
    <property type="evidence" value="ECO:0007669"/>
    <property type="project" value="TreeGrafter"/>
</dbReference>
<dbReference type="GO" id="GO:0006168">
    <property type="term" value="P:adenine salvage"/>
    <property type="evidence" value="ECO:0007669"/>
    <property type="project" value="InterPro"/>
</dbReference>
<dbReference type="GO" id="GO:0044209">
    <property type="term" value="P:AMP salvage"/>
    <property type="evidence" value="ECO:0007669"/>
    <property type="project" value="UniProtKB-UniRule"/>
</dbReference>
<dbReference type="GO" id="GO:0006166">
    <property type="term" value="P:purine ribonucleoside salvage"/>
    <property type="evidence" value="ECO:0007669"/>
    <property type="project" value="UniProtKB-KW"/>
</dbReference>
<dbReference type="CDD" id="cd06223">
    <property type="entry name" value="PRTases_typeI"/>
    <property type="match status" value="1"/>
</dbReference>
<dbReference type="FunFam" id="3.40.50.2020:FF:000021">
    <property type="entry name" value="Adenine phosphoribosyltransferase"/>
    <property type="match status" value="1"/>
</dbReference>
<dbReference type="Gene3D" id="3.40.50.2020">
    <property type="match status" value="1"/>
</dbReference>
<dbReference type="HAMAP" id="MF_00004">
    <property type="entry name" value="Aden_phosphoribosyltr"/>
    <property type="match status" value="1"/>
</dbReference>
<dbReference type="InterPro" id="IPR005764">
    <property type="entry name" value="Ade_phspho_trans"/>
</dbReference>
<dbReference type="InterPro" id="IPR000836">
    <property type="entry name" value="PRibTrfase_dom"/>
</dbReference>
<dbReference type="InterPro" id="IPR029057">
    <property type="entry name" value="PRTase-like"/>
</dbReference>
<dbReference type="InterPro" id="IPR050054">
    <property type="entry name" value="UPRTase/APRTase"/>
</dbReference>
<dbReference type="NCBIfam" id="TIGR01090">
    <property type="entry name" value="apt"/>
    <property type="match status" value="1"/>
</dbReference>
<dbReference type="NCBIfam" id="NF002634">
    <property type="entry name" value="PRK02304.1-3"/>
    <property type="match status" value="1"/>
</dbReference>
<dbReference type="NCBIfam" id="NF002636">
    <property type="entry name" value="PRK02304.1-5"/>
    <property type="match status" value="1"/>
</dbReference>
<dbReference type="PANTHER" id="PTHR32315">
    <property type="entry name" value="ADENINE PHOSPHORIBOSYLTRANSFERASE"/>
    <property type="match status" value="1"/>
</dbReference>
<dbReference type="PANTHER" id="PTHR32315:SF3">
    <property type="entry name" value="ADENINE PHOSPHORIBOSYLTRANSFERASE"/>
    <property type="match status" value="1"/>
</dbReference>
<dbReference type="Pfam" id="PF00156">
    <property type="entry name" value="Pribosyltran"/>
    <property type="match status" value="1"/>
</dbReference>
<dbReference type="SUPFAM" id="SSF53271">
    <property type="entry name" value="PRTase-like"/>
    <property type="match status" value="1"/>
</dbReference>
<dbReference type="PROSITE" id="PS00103">
    <property type="entry name" value="PUR_PYR_PR_TRANSFER"/>
    <property type="match status" value="1"/>
</dbReference>
<evidence type="ECO:0000255" key="1">
    <source>
        <dbReference type="HAMAP-Rule" id="MF_00004"/>
    </source>
</evidence>
<comment type="function">
    <text evidence="1">Catalyzes a salvage reaction resulting in the formation of AMP, that is energically less costly than de novo synthesis.</text>
</comment>
<comment type="catalytic activity">
    <reaction evidence="1">
        <text>AMP + diphosphate = 5-phospho-alpha-D-ribose 1-diphosphate + adenine</text>
        <dbReference type="Rhea" id="RHEA:16609"/>
        <dbReference type="ChEBI" id="CHEBI:16708"/>
        <dbReference type="ChEBI" id="CHEBI:33019"/>
        <dbReference type="ChEBI" id="CHEBI:58017"/>
        <dbReference type="ChEBI" id="CHEBI:456215"/>
        <dbReference type="EC" id="2.4.2.7"/>
    </reaction>
</comment>
<comment type="pathway">
    <text evidence="1">Purine metabolism; AMP biosynthesis via salvage pathway; AMP from adenine: step 1/1.</text>
</comment>
<comment type="subunit">
    <text evidence="1">Homodimer.</text>
</comment>
<comment type="subcellular location">
    <subcellularLocation>
        <location evidence="1">Cytoplasm</location>
    </subcellularLocation>
</comment>
<comment type="similarity">
    <text evidence="1">Belongs to the purine/pyrimidine phosphoribosyltransferase family.</text>
</comment>
<proteinExistence type="inferred from homology"/>
<keyword id="KW-0963">Cytoplasm</keyword>
<keyword id="KW-0328">Glycosyltransferase</keyword>
<keyword id="KW-0660">Purine salvage</keyword>
<keyword id="KW-1185">Reference proteome</keyword>
<keyword id="KW-0808">Transferase</keyword>
<feature type="chain" id="PRO_1000000365" description="Adenine phosphoribosyltransferase">
    <location>
        <begin position="1"/>
        <end position="172"/>
    </location>
</feature>
<protein>
    <recommendedName>
        <fullName evidence="1">Adenine phosphoribosyltransferase</fullName>
        <shortName evidence="1">APRT</shortName>
        <ecNumber evidence="1">2.4.2.7</ecNumber>
    </recommendedName>
</protein>
<reference key="1">
    <citation type="journal article" date="2006" name="Proc. Natl. Acad. Sci. U.S.A.">
        <title>Genome sequence of Synechococcus CC9311: insights into adaptation to a coastal environment.</title>
        <authorList>
            <person name="Palenik B."/>
            <person name="Ren Q."/>
            <person name="Dupont C.L."/>
            <person name="Myers G.S."/>
            <person name="Heidelberg J.F."/>
            <person name="Badger J.H."/>
            <person name="Madupu R."/>
            <person name="Nelson W.C."/>
            <person name="Brinkac L.M."/>
            <person name="Dodson R.J."/>
            <person name="Durkin A.S."/>
            <person name="Daugherty S.C."/>
            <person name="Sullivan S.A."/>
            <person name="Khouri H."/>
            <person name="Mohamoud Y."/>
            <person name="Halpin R."/>
            <person name="Paulsen I.T."/>
        </authorList>
    </citation>
    <scope>NUCLEOTIDE SEQUENCE [LARGE SCALE GENOMIC DNA]</scope>
    <source>
        <strain>CC9311</strain>
    </source>
</reference>